<evidence type="ECO:0000255" key="1">
    <source>
        <dbReference type="HAMAP-Rule" id="MF_00446"/>
    </source>
</evidence>
<dbReference type="EC" id="4.1.1.11" evidence="1"/>
<dbReference type="EMBL" id="CP000440">
    <property type="protein sequence ID" value="ABI88046.1"/>
    <property type="molecule type" value="Genomic_DNA"/>
</dbReference>
<dbReference type="RefSeq" id="WP_006754524.1">
    <property type="nucleotide sequence ID" value="NZ_CP009798.1"/>
</dbReference>
<dbReference type="SMR" id="Q0BCS7"/>
<dbReference type="GeneID" id="93085304"/>
<dbReference type="KEGG" id="bam:Bamb_2490"/>
<dbReference type="PATRIC" id="fig|339670.21.peg.2421"/>
<dbReference type="eggNOG" id="COG0853">
    <property type="taxonomic scope" value="Bacteria"/>
</dbReference>
<dbReference type="UniPathway" id="UPA00028">
    <property type="reaction ID" value="UER00002"/>
</dbReference>
<dbReference type="Proteomes" id="UP000000662">
    <property type="component" value="Chromosome 1"/>
</dbReference>
<dbReference type="GO" id="GO:0005829">
    <property type="term" value="C:cytosol"/>
    <property type="evidence" value="ECO:0007669"/>
    <property type="project" value="TreeGrafter"/>
</dbReference>
<dbReference type="GO" id="GO:0004068">
    <property type="term" value="F:aspartate 1-decarboxylase activity"/>
    <property type="evidence" value="ECO:0007669"/>
    <property type="project" value="UniProtKB-UniRule"/>
</dbReference>
<dbReference type="GO" id="GO:0006523">
    <property type="term" value="P:alanine biosynthetic process"/>
    <property type="evidence" value="ECO:0007669"/>
    <property type="project" value="InterPro"/>
</dbReference>
<dbReference type="GO" id="GO:0015940">
    <property type="term" value="P:pantothenate biosynthetic process"/>
    <property type="evidence" value="ECO:0007669"/>
    <property type="project" value="UniProtKB-UniRule"/>
</dbReference>
<dbReference type="CDD" id="cd06919">
    <property type="entry name" value="Asp_decarbox"/>
    <property type="match status" value="1"/>
</dbReference>
<dbReference type="Gene3D" id="2.40.40.20">
    <property type="match status" value="1"/>
</dbReference>
<dbReference type="HAMAP" id="MF_00446">
    <property type="entry name" value="PanD"/>
    <property type="match status" value="1"/>
</dbReference>
<dbReference type="InterPro" id="IPR009010">
    <property type="entry name" value="Asp_de-COase-like_dom_sf"/>
</dbReference>
<dbReference type="InterPro" id="IPR003190">
    <property type="entry name" value="Asp_decarbox"/>
</dbReference>
<dbReference type="NCBIfam" id="TIGR00223">
    <property type="entry name" value="panD"/>
    <property type="match status" value="1"/>
</dbReference>
<dbReference type="PANTHER" id="PTHR21012">
    <property type="entry name" value="ASPARTATE 1-DECARBOXYLASE"/>
    <property type="match status" value="1"/>
</dbReference>
<dbReference type="PANTHER" id="PTHR21012:SF0">
    <property type="entry name" value="ASPARTATE 1-DECARBOXYLASE"/>
    <property type="match status" value="1"/>
</dbReference>
<dbReference type="Pfam" id="PF02261">
    <property type="entry name" value="Asp_decarbox"/>
    <property type="match status" value="1"/>
</dbReference>
<dbReference type="PIRSF" id="PIRSF006246">
    <property type="entry name" value="Asp_decarbox"/>
    <property type="match status" value="1"/>
</dbReference>
<dbReference type="SUPFAM" id="SSF50692">
    <property type="entry name" value="ADC-like"/>
    <property type="match status" value="1"/>
</dbReference>
<organism>
    <name type="scientific">Burkholderia ambifaria (strain ATCC BAA-244 / DSM 16087 / CCUG 44356 / LMG 19182 / AMMD)</name>
    <name type="common">Burkholderia cepacia (strain AMMD)</name>
    <dbReference type="NCBI Taxonomy" id="339670"/>
    <lineage>
        <taxon>Bacteria</taxon>
        <taxon>Pseudomonadati</taxon>
        <taxon>Pseudomonadota</taxon>
        <taxon>Betaproteobacteria</taxon>
        <taxon>Burkholderiales</taxon>
        <taxon>Burkholderiaceae</taxon>
        <taxon>Burkholderia</taxon>
        <taxon>Burkholderia cepacia complex</taxon>
    </lineage>
</organism>
<protein>
    <recommendedName>
        <fullName evidence="1">Aspartate 1-decarboxylase</fullName>
        <ecNumber evidence="1">4.1.1.11</ecNumber>
    </recommendedName>
    <alternativeName>
        <fullName evidence="1">Aspartate alpha-decarboxylase</fullName>
    </alternativeName>
    <component>
        <recommendedName>
            <fullName evidence="1">Aspartate 1-decarboxylase beta chain</fullName>
        </recommendedName>
    </component>
    <component>
        <recommendedName>
            <fullName evidence="1">Aspartate 1-decarboxylase alpha chain</fullName>
        </recommendedName>
    </component>
</protein>
<name>PAND_BURCM</name>
<proteinExistence type="inferred from homology"/>
<sequence length="128" mass="14354">MQRHMLKSKIHRAAVTHCELHYEGSCAIDEDLLEAANLVENERIDIWNINNGERFSTYAIKGERGSGMISLNGSAARRAQLGDLVIIAAFAMVDEAELQAGWKPKLVFIDEGNKIKGHRDHVPTQNWT</sequence>
<accession>Q0BCS7</accession>
<feature type="chain" id="PRO_0000306939" description="Aspartate 1-decarboxylase beta chain" evidence="1">
    <location>
        <begin position="1"/>
        <end position="24"/>
    </location>
</feature>
<feature type="chain" id="PRO_0000306940" description="Aspartate 1-decarboxylase alpha chain" evidence="1">
    <location>
        <begin position="25"/>
        <end position="128"/>
    </location>
</feature>
<feature type="active site" description="Schiff-base intermediate with substrate; via pyruvic acid" evidence="1">
    <location>
        <position position="25"/>
    </location>
</feature>
<feature type="active site" description="Proton donor" evidence="1">
    <location>
        <position position="58"/>
    </location>
</feature>
<feature type="binding site" evidence="1">
    <location>
        <position position="57"/>
    </location>
    <ligand>
        <name>substrate</name>
    </ligand>
</feature>
<feature type="binding site" evidence="1">
    <location>
        <begin position="73"/>
        <end position="75"/>
    </location>
    <ligand>
        <name>substrate</name>
    </ligand>
</feature>
<feature type="modified residue" description="Pyruvic acid (Ser)" evidence="1">
    <location>
        <position position="25"/>
    </location>
</feature>
<comment type="function">
    <text evidence="1">Catalyzes the pyruvoyl-dependent decarboxylation of aspartate to produce beta-alanine.</text>
</comment>
<comment type="catalytic activity">
    <reaction evidence="1">
        <text>L-aspartate + H(+) = beta-alanine + CO2</text>
        <dbReference type="Rhea" id="RHEA:19497"/>
        <dbReference type="ChEBI" id="CHEBI:15378"/>
        <dbReference type="ChEBI" id="CHEBI:16526"/>
        <dbReference type="ChEBI" id="CHEBI:29991"/>
        <dbReference type="ChEBI" id="CHEBI:57966"/>
        <dbReference type="EC" id="4.1.1.11"/>
    </reaction>
</comment>
<comment type="cofactor">
    <cofactor evidence="1">
        <name>pyruvate</name>
        <dbReference type="ChEBI" id="CHEBI:15361"/>
    </cofactor>
    <text evidence="1">Binds 1 pyruvoyl group covalently per subunit.</text>
</comment>
<comment type="pathway">
    <text evidence="1">Cofactor biosynthesis; (R)-pantothenate biosynthesis; beta-alanine from L-aspartate: step 1/1.</text>
</comment>
<comment type="subunit">
    <text evidence="1">Heterooctamer of four alpha and four beta subunits.</text>
</comment>
<comment type="subcellular location">
    <subcellularLocation>
        <location evidence="1">Cytoplasm</location>
    </subcellularLocation>
</comment>
<comment type="PTM">
    <text evidence="1">Is synthesized initially as an inactive proenzyme, which is activated by self-cleavage at a specific serine bond to produce a beta-subunit with a hydroxyl group at its C-terminus and an alpha-subunit with a pyruvoyl group at its N-terminus.</text>
</comment>
<comment type="similarity">
    <text evidence="1">Belongs to the PanD family.</text>
</comment>
<keyword id="KW-0068">Autocatalytic cleavage</keyword>
<keyword id="KW-0963">Cytoplasm</keyword>
<keyword id="KW-0210">Decarboxylase</keyword>
<keyword id="KW-0456">Lyase</keyword>
<keyword id="KW-0566">Pantothenate biosynthesis</keyword>
<keyword id="KW-0670">Pyruvate</keyword>
<keyword id="KW-0704">Schiff base</keyword>
<keyword id="KW-0865">Zymogen</keyword>
<gene>
    <name evidence="1" type="primary">panD</name>
    <name type="ordered locus">Bamb_2490</name>
</gene>
<reference key="1">
    <citation type="submission" date="2006-08" db="EMBL/GenBank/DDBJ databases">
        <title>Complete sequence of chromosome 1 of Burkholderia cepacia AMMD.</title>
        <authorList>
            <person name="Copeland A."/>
            <person name="Lucas S."/>
            <person name="Lapidus A."/>
            <person name="Barry K."/>
            <person name="Detter J.C."/>
            <person name="Glavina del Rio T."/>
            <person name="Hammon N."/>
            <person name="Israni S."/>
            <person name="Pitluck S."/>
            <person name="Bruce D."/>
            <person name="Chain P."/>
            <person name="Malfatti S."/>
            <person name="Shin M."/>
            <person name="Vergez L."/>
            <person name="Schmutz J."/>
            <person name="Larimer F."/>
            <person name="Land M."/>
            <person name="Hauser L."/>
            <person name="Kyrpides N."/>
            <person name="Kim E."/>
            <person name="Parke J."/>
            <person name="Coenye T."/>
            <person name="Konstantinidis K."/>
            <person name="Ramette A."/>
            <person name="Tiedje J."/>
            <person name="Richardson P."/>
        </authorList>
    </citation>
    <scope>NUCLEOTIDE SEQUENCE [LARGE SCALE GENOMIC DNA]</scope>
    <source>
        <strain>ATCC BAA-244 / DSM 16087 / CCUG 44356 / LMG 19182 / AMMD</strain>
    </source>
</reference>